<keyword id="KW-0067">ATP-binding</keyword>
<keyword id="KW-0460">Magnesium</keyword>
<keyword id="KW-0464">Manganese</keyword>
<keyword id="KW-0479">Metal-binding</keyword>
<keyword id="KW-0547">Nucleotide-binding</keyword>
<keyword id="KW-0548">Nucleotidyltransferase</keyword>
<keyword id="KW-1185">Reference proteome</keyword>
<keyword id="KW-0808">Transferase</keyword>
<reference key="1">
    <citation type="journal article" date="2005" name="Science">
        <title>Genome streamlining in a cosmopolitan oceanic bacterium.</title>
        <authorList>
            <person name="Giovannoni S.J."/>
            <person name="Tripp H.J."/>
            <person name="Givan S."/>
            <person name="Podar M."/>
            <person name="Vergin K.L."/>
            <person name="Baptista D."/>
            <person name="Bibbs L."/>
            <person name="Eads J."/>
            <person name="Richardson T.H."/>
            <person name="Noordewier M."/>
            <person name="Rappe M.S."/>
            <person name="Short J.M."/>
            <person name="Carrington J.C."/>
            <person name="Mathur E.J."/>
        </authorList>
    </citation>
    <scope>NUCLEOTIDE SEQUENCE [LARGE SCALE GENOMIC DNA]</scope>
    <source>
        <strain>HTCC1062</strain>
    </source>
</reference>
<comment type="function">
    <text evidence="1">Nucleotidyltransferase involved in the post-translational modification of proteins. It can catalyze the addition of adenosine monophosphate (AMP) or uridine monophosphate (UMP) to a protein, resulting in modifications known as AMPylation and UMPylation.</text>
</comment>
<comment type="catalytic activity">
    <reaction evidence="1">
        <text>L-seryl-[protein] + ATP = 3-O-(5'-adenylyl)-L-seryl-[protein] + diphosphate</text>
        <dbReference type="Rhea" id="RHEA:58120"/>
        <dbReference type="Rhea" id="RHEA-COMP:9863"/>
        <dbReference type="Rhea" id="RHEA-COMP:15073"/>
        <dbReference type="ChEBI" id="CHEBI:29999"/>
        <dbReference type="ChEBI" id="CHEBI:30616"/>
        <dbReference type="ChEBI" id="CHEBI:33019"/>
        <dbReference type="ChEBI" id="CHEBI:142516"/>
        <dbReference type="EC" id="2.7.7.108"/>
    </reaction>
</comment>
<comment type="catalytic activity">
    <reaction evidence="1">
        <text>L-threonyl-[protein] + ATP = 3-O-(5'-adenylyl)-L-threonyl-[protein] + diphosphate</text>
        <dbReference type="Rhea" id="RHEA:54292"/>
        <dbReference type="Rhea" id="RHEA-COMP:11060"/>
        <dbReference type="Rhea" id="RHEA-COMP:13847"/>
        <dbReference type="ChEBI" id="CHEBI:30013"/>
        <dbReference type="ChEBI" id="CHEBI:30616"/>
        <dbReference type="ChEBI" id="CHEBI:33019"/>
        <dbReference type="ChEBI" id="CHEBI:138113"/>
        <dbReference type="EC" id="2.7.7.108"/>
    </reaction>
</comment>
<comment type="catalytic activity">
    <reaction evidence="1">
        <text>L-tyrosyl-[protein] + ATP = O-(5'-adenylyl)-L-tyrosyl-[protein] + diphosphate</text>
        <dbReference type="Rhea" id="RHEA:54288"/>
        <dbReference type="Rhea" id="RHEA-COMP:10136"/>
        <dbReference type="Rhea" id="RHEA-COMP:13846"/>
        <dbReference type="ChEBI" id="CHEBI:30616"/>
        <dbReference type="ChEBI" id="CHEBI:33019"/>
        <dbReference type="ChEBI" id="CHEBI:46858"/>
        <dbReference type="ChEBI" id="CHEBI:83624"/>
        <dbReference type="EC" id="2.7.7.108"/>
    </reaction>
</comment>
<comment type="catalytic activity">
    <reaction evidence="1">
        <text>L-histidyl-[protein] + UTP = N(tele)-(5'-uridylyl)-L-histidyl-[protein] + diphosphate</text>
        <dbReference type="Rhea" id="RHEA:83891"/>
        <dbReference type="Rhea" id="RHEA-COMP:9745"/>
        <dbReference type="Rhea" id="RHEA-COMP:20239"/>
        <dbReference type="ChEBI" id="CHEBI:29979"/>
        <dbReference type="ChEBI" id="CHEBI:33019"/>
        <dbReference type="ChEBI" id="CHEBI:46398"/>
        <dbReference type="ChEBI" id="CHEBI:233474"/>
    </reaction>
</comment>
<comment type="catalytic activity">
    <reaction evidence="1">
        <text>L-seryl-[protein] + UTP = O-(5'-uridylyl)-L-seryl-[protein] + diphosphate</text>
        <dbReference type="Rhea" id="RHEA:64604"/>
        <dbReference type="Rhea" id="RHEA-COMP:9863"/>
        <dbReference type="Rhea" id="RHEA-COMP:16635"/>
        <dbReference type="ChEBI" id="CHEBI:29999"/>
        <dbReference type="ChEBI" id="CHEBI:33019"/>
        <dbReference type="ChEBI" id="CHEBI:46398"/>
        <dbReference type="ChEBI" id="CHEBI:156051"/>
    </reaction>
</comment>
<comment type="catalytic activity">
    <reaction evidence="1">
        <text>L-tyrosyl-[protein] + UTP = O-(5'-uridylyl)-L-tyrosyl-[protein] + diphosphate</text>
        <dbReference type="Rhea" id="RHEA:83887"/>
        <dbReference type="Rhea" id="RHEA-COMP:10136"/>
        <dbReference type="Rhea" id="RHEA-COMP:20238"/>
        <dbReference type="ChEBI" id="CHEBI:33019"/>
        <dbReference type="ChEBI" id="CHEBI:46398"/>
        <dbReference type="ChEBI" id="CHEBI:46858"/>
        <dbReference type="ChEBI" id="CHEBI:90602"/>
    </reaction>
</comment>
<comment type="cofactor">
    <cofactor evidence="1">
        <name>Mg(2+)</name>
        <dbReference type="ChEBI" id="CHEBI:18420"/>
    </cofactor>
    <cofactor evidence="1">
        <name>Mn(2+)</name>
        <dbReference type="ChEBI" id="CHEBI:29035"/>
    </cofactor>
</comment>
<comment type="similarity">
    <text evidence="1">Belongs to the SELO family.</text>
</comment>
<dbReference type="EC" id="2.7.7.-" evidence="1"/>
<dbReference type="EC" id="2.7.7.108" evidence="1"/>
<dbReference type="EMBL" id="CP000084">
    <property type="protein sequence ID" value="AAZ21497.1"/>
    <property type="molecule type" value="Genomic_DNA"/>
</dbReference>
<dbReference type="RefSeq" id="WP_011281862.1">
    <property type="nucleotide sequence ID" value="NC_007205.1"/>
</dbReference>
<dbReference type="SMR" id="Q4FMU2"/>
<dbReference type="STRING" id="335992.SAR11_0678"/>
<dbReference type="GeneID" id="66295181"/>
<dbReference type="KEGG" id="pub:SAR11_0678"/>
<dbReference type="eggNOG" id="COG0397">
    <property type="taxonomic scope" value="Bacteria"/>
</dbReference>
<dbReference type="HOGENOM" id="CLU_010245_4_1_5"/>
<dbReference type="OrthoDB" id="9776281at2"/>
<dbReference type="Proteomes" id="UP000002528">
    <property type="component" value="Chromosome"/>
</dbReference>
<dbReference type="GO" id="GO:0070733">
    <property type="term" value="F:AMPylase activity"/>
    <property type="evidence" value="ECO:0007669"/>
    <property type="project" value="RHEA"/>
</dbReference>
<dbReference type="GO" id="GO:0005524">
    <property type="term" value="F:ATP binding"/>
    <property type="evidence" value="ECO:0007669"/>
    <property type="project" value="UniProtKB-UniRule"/>
</dbReference>
<dbReference type="GO" id="GO:0000287">
    <property type="term" value="F:magnesium ion binding"/>
    <property type="evidence" value="ECO:0007669"/>
    <property type="project" value="UniProtKB-UniRule"/>
</dbReference>
<dbReference type="HAMAP" id="MF_00692">
    <property type="entry name" value="YdiU_SelO"/>
    <property type="match status" value="1"/>
</dbReference>
<dbReference type="InterPro" id="IPR003846">
    <property type="entry name" value="SelO"/>
</dbReference>
<dbReference type="NCBIfam" id="NF000658">
    <property type="entry name" value="PRK00029.1"/>
    <property type="match status" value="1"/>
</dbReference>
<dbReference type="PANTHER" id="PTHR12153:SF15">
    <property type="entry name" value="PROTEIN ADENYLYLTRANSFERASE SELO, MITOCHONDRIAL"/>
    <property type="match status" value="1"/>
</dbReference>
<dbReference type="PANTHER" id="PTHR12153">
    <property type="entry name" value="SELENOPROTEIN O"/>
    <property type="match status" value="1"/>
</dbReference>
<dbReference type="Pfam" id="PF02696">
    <property type="entry name" value="SelO"/>
    <property type="match status" value="1"/>
</dbReference>
<evidence type="ECO:0000255" key="1">
    <source>
        <dbReference type="HAMAP-Rule" id="MF_00692"/>
    </source>
</evidence>
<accession>Q4FMU2</accession>
<sequence>MTIGWHFDNSYSRLPKTFKENINPVAVNAPEILILNKDLANKLDLDFSNINDDDLSKIFSGNLLPEGSNSIAQAYAGHQFGHFTMLGDGRAVLIGEHLTKNNERFDIQFKGSGRTPFSRSGDGRAVLGPMLREYIISEAMHFLKIPTTRSLAVVKTGEDVVREQISQGAILTRVALGHLRVGTFQYIAAKQNISDLEILINYTIEKYYPNIKSSKNKALDLLNVLIEKQTQLVIDWMRVGFIHGVMNTDNMSISGETIDYGPCAFMDVYDPKTVFSSIDQLGRYAYENQPKITKWNLTRFAECLIPLISTNEDEAIKLATEALDKFEQNYETKWLNMMRDKLGLYGEDKEDKNLIMELLNWMKEKKADYTNTFIFLMNKTIKNSEVYDNADFDLWKTKWMKRLVMFGNTHDKSVDLMSSCNPMVIPRNHKIEEALMLANNGDLTLFNKLIKILKNPYLVNNGDLELMSPAPHSDEKYQTFCGT</sequence>
<proteinExistence type="inferred from homology"/>
<name>SELO_PELUB</name>
<gene>
    <name evidence="1" type="primary">ydiU</name>
    <name evidence="1" type="synonym">selO</name>
    <name type="ordered locus">SAR11_0678</name>
</gene>
<feature type="chain" id="PRO_0000271840" description="Protein nucleotidyltransferase YdiU">
    <location>
        <begin position="1"/>
        <end position="483"/>
    </location>
</feature>
<feature type="active site" description="Proton acceptor" evidence="1">
    <location>
        <position position="249"/>
    </location>
</feature>
<feature type="binding site" evidence="1">
    <location>
        <position position="87"/>
    </location>
    <ligand>
        <name>ATP</name>
        <dbReference type="ChEBI" id="CHEBI:30616"/>
    </ligand>
</feature>
<feature type="binding site" evidence="1">
    <location>
        <position position="89"/>
    </location>
    <ligand>
        <name>ATP</name>
        <dbReference type="ChEBI" id="CHEBI:30616"/>
    </ligand>
</feature>
<feature type="binding site" evidence="1">
    <location>
        <position position="90"/>
    </location>
    <ligand>
        <name>ATP</name>
        <dbReference type="ChEBI" id="CHEBI:30616"/>
    </ligand>
</feature>
<feature type="binding site" evidence="1">
    <location>
        <position position="110"/>
    </location>
    <ligand>
        <name>ATP</name>
        <dbReference type="ChEBI" id="CHEBI:30616"/>
    </ligand>
</feature>
<feature type="binding site" evidence="1">
    <location>
        <position position="122"/>
    </location>
    <ligand>
        <name>ATP</name>
        <dbReference type="ChEBI" id="CHEBI:30616"/>
    </ligand>
</feature>
<feature type="binding site" evidence="1">
    <location>
        <position position="123"/>
    </location>
    <ligand>
        <name>ATP</name>
        <dbReference type="ChEBI" id="CHEBI:30616"/>
    </ligand>
</feature>
<feature type="binding site" evidence="1">
    <location>
        <position position="173"/>
    </location>
    <ligand>
        <name>ATP</name>
        <dbReference type="ChEBI" id="CHEBI:30616"/>
    </ligand>
</feature>
<feature type="binding site" evidence="1">
    <location>
        <position position="180"/>
    </location>
    <ligand>
        <name>ATP</name>
        <dbReference type="ChEBI" id="CHEBI:30616"/>
    </ligand>
</feature>
<feature type="binding site" evidence="1">
    <location>
        <position position="250"/>
    </location>
    <ligand>
        <name>Mg(2+)</name>
        <dbReference type="ChEBI" id="CHEBI:18420"/>
    </ligand>
</feature>
<feature type="binding site" evidence="1">
    <location>
        <position position="259"/>
    </location>
    <ligand>
        <name>ATP</name>
        <dbReference type="ChEBI" id="CHEBI:30616"/>
    </ligand>
</feature>
<feature type="binding site" evidence="1">
    <location>
        <position position="259"/>
    </location>
    <ligand>
        <name>Mg(2+)</name>
        <dbReference type="ChEBI" id="CHEBI:18420"/>
    </ligand>
</feature>
<organism>
    <name type="scientific">Pelagibacter ubique (strain HTCC1062)</name>
    <dbReference type="NCBI Taxonomy" id="335992"/>
    <lineage>
        <taxon>Bacteria</taxon>
        <taxon>Pseudomonadati</taxon>
        <taxon>Pseudomonadota</taxon>
        <taxon>Alphaproteobacteria</taxon>
        <taxon>Candidatus Pelagibacterales</taxon>
        <taxon>Candidatus Pelagibacteraceae</taxon>
        <taxon>Candidatus Pelagibacter</taxon>
    </lineage>
</organism>
<protein>
    <recommendedName>
        <fullName evidence="1">Protein nucleotidyltransferase YdiU</fullName>
        <ecNumber evidence="1">2.7.7.-</ecNumber>
    </recommendedName>
    <alternativeName>
        <fullName evidence="1">Protein adenylyltransferase YdiU</fullName>
        <ecNumber evidence="1">2.7.7.108</ecNumber>
    </alternativeName>
    <alternativeName>
        <fullName evidence="1">Protein uridylyltransferase YdiU</fullName>
        <ecNumber evidence="1">2.7.7.-</ecNumber>
    </alternativeName>
</protein>